<keyword id="KW-0349">Heme</keyword>
<keyword id="KW-0408">Iron</keyword>
<keyword id="KW-0479">Metal-binding</keyword>
<keyword id="KW-0503">Monooxygenase</keyword>
<keyword id="KW-0521">NADP</keyword>
<keyword id="KW-0560">Oxidoreductase</keyword>
<keyword id="KW-1185">Reference proteome</keyword>
<feature type="chain" id="PRO_0000446454" description="Cytochrome P450 monooxygenase cnsC">
    <location>
        <begin position="1"/>
        <end position="495"/>
    </location>
</feature>
<feature type="binding site" description="axial binding residue" evidence="1">
    <location>
        <position position="434"/>
    </location>
    <ligand>
        <name>heme</name>
        <dbReference type="ChEBI" id="CHEBI:30413"/>
    </ligand>
    <ligandPart>
        <name>Fe</name>
        <dbReference type="ChEBI" id="CHEBI:18248"/>
    </ligandPart>
</feature>
<name>CNSC_PENEN</name>
<reference key="1">
    <citation type="journal article" date="2015" name="Mol. Plant Microbe Interact.">
        <title>Genome, transcriptome, and functional analyses of Penicillium expansum provide new insights into secondary metabolism and pathogenicity.</title>
        <authorList>
            <person name="Ballester A.R."/>
            <person name="Marcet-Houben M."/>
            <person name="Levin E."/>
            <person name="Sela N."/>
            <person name="Selma-Lazaro C."/>
            <person name="Carmona L."/>
            <person name="Wisniewski M."/>
            <person name="Droby S."/>
            <person name="Gonzalez-Candelas L."/>
            <person name="Gabaldon T."/>
        </authorList>
    </citation>
    <scope>NUCLEOTIDE SEQUENCE [LARGE SCALE GENOMIC DNA]</scope>
    <source>
        <strain>MD-8</strain>
    </source>
</reference>
<reference key="2">
    <citation type="journal article" date="2015" name="Angew. Chem. Int. Ed.">
        <title>Elucidation of the concise biosynthetic pathway of the communesin indole alkaloids.</title>
        <authorList>
            <person name="Lin H.C."/>
            <person name="Chiou G."/>
            <person name="Chooi Y.H."/>
            <person name="McMahon T.C."/>
            <person name="Xu W."/>
            <person name="Garg N.K."/>
            <person name="Tang Y."/>
        </authorList>
    </citation>
    <scope>IDENTIFICATION</scope>
    <scope>FUNCTION</scope>
    <scope>DISRUPTION PHENOTYPE</scope>
    <scope>PATHWAY</scope>
</reference>
<reference key="3">
    <citation type="journal article" date="2016" name="J. Am. Chem. Soc.">
        <title>P450-mediated coupling of indole fragments to forge communesin and unnatural isomers.</title>
        <authorList>
            <person name="Lin H.C."/>
            <person name="McMahon T.C."/>
            <person name="Patel A."/>
            <person name="Corsello M."/>
            <person name="Simon A."/>
            <person name="Xu W."/>
            <person name="Zhao M."/>
            <person name="Houk K.N."/>
            <person name="Garg N.K."/>
            <person name="Tang Y."/>
        </authorList>
    </citation>
    <scope>FUNCTION</scope>
    <scope>CATALYTIC ACTIVITY</scope>
    <scope>PATHWAY</scope>
</reference>
<gene>
    <name evidence="4" type="primary">cnsC</name>
    <name type="ORF">PEX2_055370</name>
</gene>
<comment type="function">
    <text evidence="2 3">Cytochrome P450 monooxygenase; part of the gene cluster that mediates the biosynthesis of communesins, a prominent class of indole alkaloids with great potential as pharmaceuticals (PubMed:25571861). Communesins are biosynthesized by the coupling of tryptamine and aurantioclavine, two building blocks derived from L-tryptophan (PubMed:25571861). The L-tryptophan decarboxylase cnsB converts L-tryptophan to tryptamine, whereas the tryptophan dimethylallyltransferase cnsF converts L-tryptophan to 4-dimethylallyl tryptophan which is further transformed to aurantioclavine by the aurantioclavine synthase cnsA, probably aided by the catalase cnsD (PubMed:25571861). The cytochrome P450 monooxygenase cnsC catalyzes the heterodimeric coupling between the two different indole moieties, tryptamine and aurantioclavine, to construct vicinal quaternary stereocenters and yield the heptacyclic communesin scaffold (PubMed:26963294). The O-methyltransferase cnsE then methylates the communesin scaffold to produce communesin K, the simplest characterized communesin that contains the heptacyclic core (PubMed:25571861). The dioxygenase cnsJ converts communesin K into communesin I (PubMed:25571861). Acylation to introduce the hexadienyl group at position N16 of communesin I by the acyltransferase cnsK leads to the production of communesin B. The hexadienyl group is produced by the highly reducing polyketide synthase cnsI, before being hydrolytically removed from cnsI by the serine hydrolase cnsH, converted into hexadienyl-CoA by the CoA ligase cnsG, and then transferred to communesin I by cnsK (PubMed:25571861). Surprisingly, cnsK may also be a promiscuous acyltransferase that can tolerate a range of acyl groups, including acetyl-, propionyl-, and butyryl-CoA, which lead to communesins A, G and H respectively (PubMed:25571861). The roles of the alpha-ketoglutarate-dependent dioxygenases cnsM and cnsP have still to be determined (PubMed:25571861).</text>
</comment>
<comment type="cofactor">
    <cofactor evidence="1">
        <name>heme</name>
        <dbReference type="ChEBI" id="CHEBI:30413"/>
    </cofactor>
</comment>
<comment type="pathway">
    <text evidence="2">Alkaloid biosynthesis.</text>
</comment>
<comment type="disruption phenotype">
    <text evidence="2">Abolishes the biosynthesis of communesins A and B and leads to the accumulation of aurantioclavine.</text>
</comment>
<comment type="similarity">
    <text evidence="5">Belongs to the cytochrome P450 family.</text>
</comment>
<accession>A0A0A2JY25</accession>
<proteinExistence type="evidence at protein level"/>
<sequence length="495" mass="56193">MKLAPAFPRSYFMGRFWAGNTTGDGLEQTWLDGYYRYTKRGKVFARKTELNNWSLIFPSELSHDWRNLPLDQISFQHWAQEGGKIKHHTVLTKAHSKVALLFAKKELLLAVQKILVKETLSLLPGIIGDKWVSLDLMQVCSDLVIKLNARILYGPAYADDQDFHKRLITFANGVDGINSIYFTWPRSLWKIVSLVHPTIRGFYANLPHLKKRMLPDIRSRIAKLQAKAAQGEGKVPASDEDVTFMTALIKMHMEEGTLGEQDSDLEKVCMEAVFYTYEFWGPIMPTLFFMLMAIGKNPGYLQALREEISSALESNDWSSDFLARTPKLESFIREVLRLYVPAQWLITDIHRASLATVSRRTEKPIYVQSMDMHIPAGVNLCVPAKYIHRDPDFYPNPTTFDGFRFYDPVTNNVTIRATTATDTYLSFSHGSGLCPGRVFGAHVVQVLCAVFIMEYDVKVDPSKTFPDVQSTKEGRGDGMVGTTDILIRKRTSAKV</sequence>
<protein>
    <recommendedName>
        <fullName evidence="4">Cytochrome P450 monooxygenase cnsC</fullName>
        <ecNumber evidence="3">1.-.-.-</ecNumber>
    </recommendedName>
    <alternativeName>
        <fullName evidence="4">Communesin biosynthesis cluster protein C</fullName>
    </alternativeName>
</protein>
<dbReference type="EC" id="1.-.-.-" evidence="3"/>
<dbReference type="EMBL" id="JQFZ01000090">
    <property type="protein sequence ID" value="KGO59696.1"/>
    <property type="molecule type" value="Genomic_DNA"/>
</dbReference>
<dbReference type="RefSeq" id="XP_016600809.1">
    <property type="nucleotide sequence ID" value="XM_016742811.1"/>
</dbReference>
<dbReference type="SMR" id="A0A0A2JY25"/>
<dbReference type="STRING" id="27334.A0A0A2JY25"/>
<dbReference type="GeneID" id="27678230"/>
<dbReference type="VEuPathDB" id="FungiDB:PEXP_030480"/>
<dbReference type="HOGENOM" id="CLU_022195_8_0_1"/>
<dbReference type="Proteomes" id="UP000030143">
    <property type="component" value="Unassembled WGS sequence"/>
</dbReference>
<dbReference type="GO" id="GO:0020037">
    <property type="term" value="F:heme binding"/>
    <property type="evidence" value="ECO:0007669"/>
    <property type="project" value="InterPro"/>
</dbReference>
<dbReference type="GO" id="GO:0005506">
    <property type="term" value="F:iron ion binding"/>
    <property type="evidence" value="ECO:0007669"/>
    <property type="project" value="InterPro"/>
</dbReference>
<dbReference type="GO" id="GO:0004497">
    <property type="term" value="F:monooxygenase activity"/>
    <property type="evidence" value="ECO:0007669"/>
    <property type="project" value="UniProtKB-KW"/>
</dbReference>
<dbReference type="GO" id="GO:0016705">
    <property type="term" value="F:oxidoreductase activity, acting on paired donors, with incorporation or reduction of molecular oxygen"/>
    <property type="evidence" value="ECO:0007669"/>
    <property type="project" value="InterPro"/>
</dbReference>
<dbReference type="GO" id="GO:0043386">
    <property type="term" value="P:mycotoxin biosynthetic process"/>
    <property type="evidence" value="ECO:0007669"/>
    <property type="project" value="UniProtKB-ARBA"/>
</dbReference>
<dbReference type="CDD" id="cd11041">
    <property type="entry name" value="CYP503A1-like"/>
    <property type="match status" value="1"/>
</dbReference>
<dbReference type="Gene3D" id="1.10.630.10">
    <property type="entry name" value="Cytochrome P450"/>
    <property type="match status" value="1"/>
</dbReference>
<dbReference type="InterPro" id="IPR001128">
    <property type="entry name" value="Cyt_P450"/>
</dbReference>
<dbReference type="InterPro" id="IPR002403">
    <property type="entry name" value="Cyt_P450_E_grp-IV"/>
</dbReference>
<dbReference type="InterPro" id="IPR036396">
    <property type="entry name" value="Cyt_P450_sf"/>
</dbReference>
<dbReference type="PANTHER" id="PTHR46206">
    <property type="entry name" value="CYTOCHROME P450"/>
    <property type="match status" value="1"/>
</dbReference>
<dbReference type="Pfam" id="PF00067">
    <property type="entry name" value="p450"/>
    <property type="match status" value="1"/>
</dbReference>
<dbReference type="PRINTS" id="PR00465">
    <property type="entry name" value="EP450IV"/>
</dbReference>
<dbReference type="SUPFAM" id="SSF48264">
    <property type="entry name" value="Cytochrome P450"/>
    <property type="match status" value="1"/>
</dbReference>
<evidence type="ECO:0000250" key="1">
    <source>
        <dbReference type="UniProtKB" id="P04798"/>
    </source>
</evidence>
<evidence type="ECO:0000269" key="2">
    <source>
    </source>
</evidence>
<evidence type="ECO:0000269" key="3">
    <source>
    </source>
</evidence>
<evidence type="ECO:0000303" key="4">
    <source>
    </source>
</evidence>
<evidence type="ECO:0000305" key="5"/>
<organism>
    <name type="scientific">Penicillium expansum</name>
    <name type="common">Blue mold rot fungus</name>
    <dbReference type="NCBI Taxonomy" id="27334"/>
    <lineage>
        <taxon>Eukaryota</taxon>
        <taxon>Fungi</taxon>
        <taxon>Dikarya</taxon>
        <taxon>Ascomycota</taxon>
        <taxon>Pezizomycotina</taxon>
        <taxon>Eurotiomycetes</taxon>
        <taxon>Eurotiomycetidae</taxon>
        <taxon>Eurotiales</taxon>
        <taxon>Aspergillaceae</taxon>
        <taxon>Penicillium</taxon>
    </lineage>
</organism>